<sequence length="302" mass="34670">MIKVIERDGKVRLPFSRGILTRSITSVGVDVDLAYAIATEVQEELIRQGKKVVTKEEIRNITYQKLVEKGFKEEAKRYLFWRRFRKLKIPLIILLGGPTGVGKSTIATELAFRLGIRSVIGTDTIREVMRKIITPELLPTIHTSTFLAWKELRGTVTGSPIIAGFESQVNAVAVGVNAVIQRAIKEGLNAIIEGIHLVPGFIKIDYEMAFMYMIVARSREELEARFYERTRYSKRSAQYYISHLDEIMEIQEYLIKKAREYRVPIIENVELEKTISTIMEDIMEKTVEIMKKKGLDMLEEPK</sequence>
<name>PGK2_PYRFU</name>
<organism>
    <name type="scientific">Pyrococcus furiosus (strain ATCC 43587 / DSM 3638 / JCM 8422 / Vc1)</name>
    <dbReference type="NCBI Taxonomy" id="186497"/>
    <lineage>
        <taxon>Archaea</taxon>
        <taxon>Methanobacteriati</taxon>
        <taxon>Methanobacteriota</taxon>
        <taxon>Thermococci</taxon>
        <taxon>Thermococcales</taxon>
        <taxon>Thermococcaceae</taxon>
        <taxon>Pyrococcus</taxon>
    </lineage>
</organism>
<comment type="function">
    <text evidence="1">Catalyzes the phosphorylation of 2-phosphoglycerate to 2,3-diphosphoglycerate. Involved in the biosynthesis of cyclic 2,3-bisphosphoglycerate, a thermoprotectant.</text>
</comment>
<comment type="catalytic activity">
    <reaction evidence="1">
        <text>(2R)-2-phosphoglycerate + ATP = (2R)-2,3-bisphosphoglycerate + ADP + H(+)</text>
        <dbReference type="Rhea" id="RHEA:42408"/>
        <dbReference type="ChEBI" id="CHEBI:15378"/>
        <dbReference type="ChEBI" id="CHEBI:30616"/>
        <dbReference type="ChEBI" id="CHEBI:58248"/>
        <dbReference type="ChEBI" id="CHEBI:58289"/>
        <dbReference type="ChEBI" id="CHEBI:456216"/>
        <dbReference type="EC" id="2.7.2.16"/>
    </reaction>
</comment>
<comment type="cofactor">
    <cofactor evidence="1">
        <name>a divalent metal cation</name>
        <dbReference type="ChEBI" id="CHEBI:60240"/>
    </cofactor>
</comment>
<comment type="pathway">
    <text evidence="1">Thermoadapter biosynthesis; cyclic 2,3-diphosphoglycerate biosynthesis; cyclic 2,3-diphosphoglycerate from 2-phospho-D-glycerate: step 1/2.</text>
</comment>
<comment type="similarity">
    <text evidence="1">Belongs to the 2-phosphoglycerate kinase family.</text>
</comment>
<keyword id="KW-0067">ATP-binding</keyword>
<keyword id="KW-0418">Kinase</keyword>
<keyword id="KW-0547">Nucleotide-binding</keyword>
<keyword id="KW-1185">Reference proteome</keyword>
<keyword id="KW-0808">Transferase</keyword>
<dbReference type="EC" id="2.7.2.16" evidence="1"/>
<dbReference type="EMBL" id="AE009950">
    <property type="protein sequence ID" value="AAL80202.1"/>
    <property type="molecule type" value="Genomic_DNA"/>
</dbReference>
<dbReference type="EMBL" id="AF013169">
    <property type="protein sequence ID" value="AAC25559.1"/>
    <property type="molecule type" value="Genomic_DNA"/>
</dbReference>
<dbReference type="RefSeq" id="WP_011011190.1">
    <property type="nucleotide sequence ID" value="NZ_CP023154.1"/>
</dbReference>
<dbReference type="STRING" id="186497.PF0078"/>
<dbReference type="PaxDb" id="186497-PF0078"/>
<dbReference type="KEGG" id="pfu:PF0078"/>
<dbReference type="PATRIC" id="fig|186497.12.peg.82"/>
<dbReference type="eggNOG" id="arCOG01967">
    <property type="taxonomic scope" value="Archaea"/>
</dbReference>
<dbReference type="HOGENOM" id="CLU_848909_0_0_2"/>
<dbReference type="OrthoDB" id="358692at2157"/>
<dbReference type="PhylomeDB" id="Q8U4K7"/>
<dbReference type="UniPathway" id="UPA00551">
    <property type="reaction ID" value="UER00609"/>
</dbReference>
<dbReference type="Proteomes" id="UP000001013">
    <property type="component" value="Chromosome"/>
</dbReference>
<dbReference type="GO" id="GO:0005524">
    <property type="term" value="F:ATP binding"/>
    <property type="evidence" value="ECO:0007669"/>
    <property type="project" value="UniProtKB-KW"/>
</dbReference>
<dbReference type="GO" id="GO:0016301">
    <property type="term" value="F:kinase activity"/>
    <property type="evidence" value="ECO:0007669"/>
    <property type="project" value="UniProtKB-KW"/>
</dbReference>
<dbReference type="GO" id="GO:0016774">
    <property type="term" value="F:phosphotransferase activity, carboxyl group as acceptor"/>
    <property type="evidence" value="ECO:0007669"/>
    <property type="project" value="UniProtKB-UniRule"/>
</dbReference>
<dbReference type="Gene3D" id="3.40.50.300">
    <property type="entry name" value="P-loop containing nucleotide triphosphate hydrolases"/>
    <property type="match status" value="1"/>
</dbReference>
<dbReference type="HAMAP" id="MF_00769">
    <property type="entry name" value="2PGK"/>
    <property type="match status" value="1"/>
</dbReference>
<dbReference type="InterPro" id="IPR020872">
    <property type="entry name" value="2PKG"/>
</dbReference>
<dbReference type="InterPro" id="IPR005144">
    <property type="entry name" value="ATP-cone_dom"/>
</dbReference>
<dbReference type="InterPro" id="IPR027417">
    <property type="entry name" value="P-loop_NTPase"/>
</dbReference>
<dbReference type="NCBIfam" id="NF003259">
    <property type="entry name" value="PRK04220.1"/>
    <property type="match status" value="1"/>
</dbReference>
<dbReference type="PANTHER" id="PTHR33477">
    <property type="entry name" value="P-LOOP NTPASE DOMAIN-CONTAINING PROTEIN LPA1 HOMOLOG 1"/>
    <property type="match status" value="1"/>
</dbReference>
<dbReference type="PANTHER" id="PTHR33477:SF3">
    <property type="entry name" value="P-LOOP NTPASE DOMAIN-CONTAINING PROTEIN LPA1 HOMOLOG 1"/>
    <property type="match status" value="1"/>
</dbReference>
<dbReference type="Pfam" id="PF03477">
    <property type="entry name" value="ATP-cone"/>
    <property type="match status" value="1"/>
</dbReference>
<dbReference type="SUPFAM" id="SSF52540">
    <property type="entry name" value="P-loop containing nucleoside triphosphate hydrolases"/>
    <property type="match status" value="1"/>
</dbReference>
<dbReference type="PROSITE" id="PS51161">
    <property type="entry name" value="ATP_CONE"/>
    <property type="match status" value="1"/>
</dbReference>
<evidence type="ECO:0000255" key="1">
    <source>
        <dbReference type="HAMAP-Rule" id="MF_00769"/>
    </source>
</evidence>
<accession>Q8U4K7</accession>
<accession>O73953</accession>
<gene>
    <name evidence="1" type="primary">pgk2</name>
    <name type="ordered locus">PF0078</name>
</gene>
<feature type="chain" id="PRO_0000156154" description="2-phosphoglycerate kinase">
    <location>
        <begin position="1"/>
        <end position="302"/>
    </location>
</feature>
<feature type="domain" description="ATP-cone" evidence="1">
    <location>
        <begin position="2"/>
        <end position="89"/>
    </location>
</feature>
<reference key="1">
    <citation type="journal article" date="1999" name="Genetics">
        <title>Divergence of the hyperthermophilic archaea Pyrococcus furiosus and P. horikoshii inferred from complete genomic sequences.</title>
        <authorList>
            <person name="Maeder D.L."/>
            <person name="Weiss R.B."/>
            <person name="Dunn D.M."/>
            <person name="Cherry J.L."/>
            <person name="Gonzalez J.M."/>
            <person name="DiRuggiero J."/>
            <person name="Robb F.T."/>
        </authorList>
    </citation>
    <scope>NUCLEOTIDE SEQUENCE [LARGE SCALE GENOMIC DNA]</scope>
    <source>
        <strain>ATCC 43587 / DSM 3638 / JCM 8422 / Vc1</strain>
    </source>
</reference>
<reference key="2">
    <citation type="journal article" date="1999" name="J. Bacteriol.">
        <title>Transcriptional regulation in the hyperthermophilic archaeon Pyrococcus furiosus: coordinated expression of divergently oriented genes in response to beta-linked glucose polymers.</title>
        <authorList>
            <person name="Voorhorst W.G."/>
            <person name="Gueguen Y."/>
            <person name="Geerling A.C.M."/>
            <person name="Schut G."/>
            <person name="Dahlke I."/>
            <person name="Thomm M."/>
            <person name="van der Oost J."/>
            <person name="de Vos W.M."/>
        </authorList>
    </citation>
    <scope>NUCLEOTIDE SEQUENCE [GENOMIC DNA] OF 168-302</scope>
    <source>
        <strain>ATCC 43587 / DSM 3638 / JCM 8422 / Vc1</strain>
    </source>
</reference>
<protein>
    <recommendedName>
        <fullName evidence="1">2-phosphoglycerate kinase</fullName>
        <shortName evidence="1">2PGK</shortName>
        <ecNumber evidence="1">2.7.2.16</ecNumber>
    </recommendedName>
</protein>
<proteinExistence type="inferred from homology"/>